<feature type="initiator methionine" description="Removed" evidence="2">
    <location>
        <position position="1"/>
    </location>
</feature>
<feature type="chain" id="PRO_0000121546" description="Programmed cell death protein 5">
    <location>
        <begin position="2"/>
        <end position="126"/>
    </location>
</feature>
<feature type="region of interest" description="Disordered" evidence="3">
    <location>
        <begin position="17"/>
        <end position="36"/>
    </location>
</feature>
<feature type="modified residue" description="N-acetylalanine" evidence="2">
    <location>
        <position position="2"/>
    </location>
</feature>
<feature type="modified residue" description="Phosphoserine" evidence="2">
    <location>
        <position position="51"/>
    </location>
</feature>
<feature type="modified residue" description="N6-acetyllysine" evidence="2">
    <location>
        <position position="63"/>
    </location>
</feature>
<feature type="modified residue" description="Phosphoserine" evidence="6 7 8 9">
    <location>
        <position position="119"/>
    </location>
</feature>
<proteinExistence type="evidence at protein level"/>
<accession>P56812</accession>
<comment type="function">
    <text evidence="1">May function in the process of apoptosis.</text>
</comment>
<comment type="tissue specificity">
    <text evidence="4">Widely expressed.</text>
</comment>
<comment type="similarity">
    <text evidence="5">Belongs to the PDCD5 family.</text>
</comment>
<reference key="1">
    <citation type="journal article" date="1999" name="Biochem. Biophys. Res. Commun.">
        <title>TFAR19, a novel apoptosis-related gene cloned from human leukemia cell line TF-1, could enhance apoptosis of some tumor cells induced by growth factor withdrawal.</title>
        <authorList>
            <person name="Liu H.T."/>
            <person name="Wang Y.G."/>
            <person name="Zhang Y.M."/>
            <person name="Song Q.S."/>
            <person name="Di C.H."/>
            <person name="Chen G."/>
            <person name="Tang J."/>
            <person name="Ma D.L."/>
        </authorList>
    </citation>
    <scope>NUCLEOTIDE SEQUENCE [MRNA]</scope>
    <scope>TISSUE SPECIFICITY</scope>
    <source>
        <tissue>Heart</tissue>
    </source>
</reference>
<reference key="2">
    <citation type="journal article" date="2004" name="Genome Res.">
        <title>The status, quality, and expansion of the NIH full-length cDNA project: the Mammalian Gene Collection (MGC).</title>
        <authorList>
            <consortium name="The MGC Project Team"/>
        </authorList>
    </citation>
    <scope>NUCLEOTIDE SEQUENCE [LARGE SCALE MRNA]</scope>
    <source>
        <strain>C57BL/6J</strain>
        <tissue>Brain</tissue>
        <tissue>Testis</tissue>
    </source>
</reference>
<reference key="3">
    <citation type="journal article" date="2004" name="Mol. Cell. Proteomics">
        <title>Phosphoproteomic analysis of the developing mouse brain.</title>
        <authorList>
            <person name="Ballif B.A."/>
            <person name="Villen J."/>
            <person name="Beausoleil S.A."/>
            <person name="Schwartz D."/>
            <person name="Gygi S.P."/>
        </authorList>
    </citation>
    <scope>PHOSPHORYLATION [LARGE SCALE ANALYSIS] AT SER-119</scope>
    <scope>IDENTIFICATION BY MASS SPECTROMETRY [LARGE SCALE ANALYSIS]</scope>
    <source>
        <tissue>Embryonic brain</tissue>
    </source>
</reference>
<reference key="4">
    <citation type="journal article" date="2007" name="Proc. Natl. Acad. Sci. U.S.A.">
        <title>Large-scale phosphorylation analysis of mouse liver.</title>
        <authorList>
            <person name="Villen J."/>
            <person name="Beausoleil S.A."/>
            <person name="Gerber S.A."/>
            <person name="Gygi S.P."/>
        </authorList>
    </citation>
    <scope>PHOSPHORYLATION [LARGE SCALE ANALYSIS] AT SER-119</scope>
    <scope>IDENTIFICATION BY MASS SPECTROMETRY [LARGE SCALE ANALYSIS]</scope>
    <source>
        <tissue>Liver</tissue>
    </source>
</reference>
<reference key="5">
    <citation type="journal article" date="2009" name="Mol. Cell. Proteomics">
        <title>Large scale localization of protein phosphorylation by use of electron capture dissociation mass spectrometry.</title>
        <authorList>
            <person name="Sweet S.M."/>
            <person name="Bailey C.M."/>
            <person name="Cunningham D.L."/>
            <person name="Heath J.K."/>
            <person name="Cooper H.J."/>
        </authorList>
    </citation>
    <scope>PHOSPHORYLATION [LARGE SCALE ANALYSIS] AT SER-119</scope>
    <scope>IDENTIFICATION BY MASS SPECTROMETRY [LARGE SCALE ANALYSIS]</scope>
    <source>
        <tissue>Embryonic fibroblast</tissue>
    </source>
</reference>
<reference key="6">
    <citation type="journal article" date="2010" name="Cell">
        <title>A tissue-specific atlas of mouse protein phosphorylation and expression.</title>
        <authorList>
            <person name="Huttlin E.L."/>
            <person name="Jedrychowski M.P."/>
            <person name="Elias J.E."/>
            <person name="Goswami T."/>
            <person name="Rad R."/>
            <person name="Beausoleil S.A."/>
            <person name="Villen J."/>
            <person name="Haas W."/>
            <person name="Sowa M.E."/>
            <person name="Gygi S.P."/>
        </authorList>
    </citation>
    <scope>PHOSPHORYLATION [LARGE SCALE ANALYSIS] AT SER-119</scope>
    <scope>IDENTIFICATION BY MASS SPECTROMETRY [LARGE SCALE ANALYSIS]</scope>
    <source>
        <tissue>Brain</tissue>
        <tissue>Brown adipose tissue</tissue>
        <tissue>Heart</tissue>
        <tissue>Kidney</tissue>
        <tissue>Liver</tissue>
        <tissue>Lung</tissue>
        <tissue>Pancreas</tissue>
        <tissue>Spleen</tissue>
        <tissue>Testis</tissue>
    </source>
</reference>
<evidence type="ECO:0000250" key="1"/>
<evidence type="ECO:0000250" key="2">
    <source>
        <dbReference type="UniProtKB" id="O14737"/>
    </source>
</evidence>
<evidence type="ECO:0000256" key="3">
    <source>
        <dbReference type="SAM" id="MobiDB-lite"/>
    </source>
</evidence>
<evidence type="ECO:0000269" key="4">
    <source>
    </source>
</evidence>
<evidence type="ECO:0000305" key="5"/>
<evidence type="ECO:0007744" key="6">
    <source>
    </source>
</evidence>
<evidence type="ECO:0007744" key="7">
    <source>
    </source>
</evidence>
<evidence type="ECO:0007744" key="8">
    <source>
    </source>
</evidence>
<evidence type="ECO:0007744" key="9">
    <source>
    </source>
</evidence>
<gene>
    <name type="primary">Pdcd5</name>
    <name type="synonym">Tfar19</name>
</gene>
<organism>
    <name type="scientific">Mus musculus</name>
    <name type="common">Mouse</name>
    <dbReference type="NCBI Taxonomy" id="10090"/>
    <lineage>
        <taxon>Eukaryota</taxon>
        <taxon>Metazoa</taxon>
        <taxon>Chordata</taxon>
        <taxon>Craniata</taxon>
        <taxon>Vertebrata</taxon>
        <taxon>Euteleostomi</taxon>
        <taxon>Mammalia</taxon>
        <taxon>Eutheria</taxon>
        <taxon>Euarchontoglires</taxon>
        <taxon>Glires</taxon>
        <taxon>Rodentia</taxon>
        <taxon>Myomorpha</taxon>
        <taxon>Muroidea</taxon>
        <taxon>Muridae</taxon>
        <taxon>Murinae</taxon>
        <taxon>Mus</taxon>
        <taxon>Mus</taxon>
    </lineage>
</organism>
<protein>
    <recommendedName>
        <fullName>Programmed cell death protein 5</fullName>
    </recommendedName>
    <alternativeName>
        <fullName>TF-1 cell apoptosis-related protein 19</fullName>
        <shortName>Protein TFAR19</shortName>
    </alternativeName>
</protein>
<dbReference type="EMBL" id="AF161074">
    <property type="protein sequence ID" value="AAD45607.1"/>
    <property type="molecule type" value="mRNA"/>
</dbReference>
<dbReference type="EMBL" id="BC048476">
    <property type="protein sequence ID" value="AAH48476.1"/>
    <property type="molecule type" value="mRNA"/>
</dbReference>
<dbReference type="EMBL" id="BC056167">
    <property type="protein sequence ID" value="AAH56167.1"/>
    <property type="molecule type" value="mRNA"/>
</dbReference>
<dbReference type="CCDS" id="CCDS52203.1"/>
<dbReference type="RefSeq" id="NP_062720.1">
    <property type="nucleotide sequence ID" value="NM_019746.5"/>
</dbReference>
<dbReference type="RefSeq" id="XP_001478306.1">
    <property type="nucleotide sequence ID" value="XM_001478256.5"/>
</dbReference>
<dbReference type="SMR" id="P56812"/>
<dbReference type="BioGRID" id="207907">
    <property type="interactions" value="1"/>
</dbReference>
<dbReference type="FunCoup" id="P56812">
    <property type="interactions" value="3149"/>
</dbReference>
<dbReference type="IntAct" id="P56812">
    <property type="interactions" value="1"/>
</dbReference>
<dbReference type="STRING" id="10090.ENSMUSP00000113761"/>
<dbReference type="iPTMnet" id="P56812"/>
<dbReference type="PhosphoSitePlus" id="P56812"/>
<dbReference type="CPTAC" id="non-CPTAC-3853"/>
<dbReference type="jPOST" id="P56812"/>
<dbReference type="PaxDb" id="10090-ENSMUSP00000113761"/>
<dbReference type="PeptideAtlas" id="P56812"/>
<dbReference type="ProteomicsDB" id="288012"/>
<dbReference type="Pumba" id="P56812"/>
<dbReference type="TopDownProteomics" id="P56812"/>
<dbReference type="Antibodypedia" id="15598">
    <property type="antibodies" value="242 antibodies from 31 providers"/>
</dbReference>
<dbReference type="DNASU" id="56330"/>
<dbReference type="Ensembl" id="ENSMUST00000118501.8">
    <property type="protein sequence ID" value="ENSMUSP00000113761.2"/>
    <property type="gene ID" value="ENSMUSG00000030417.16"/>
</dbReference>
<dbReference type="GeneID" id="56330"/>
<dbReference type="KEGG" id="mmu:56330"/>
<dbReference type="UCSC" id="uc009gkf.1">
    <property type="organism name" value="mouse"/>
</dbReference>
<dbReference type="AGR" id="MGI:1913538"/>
<dbReference type="CTD" id="9141"/>
<dbReference type="MGI" id="MGI:1913538">
    <property type="gene designation" value="Pdcd5"/>
</dbReference>
<dbReference type="VEuPathDB" id="HostDB:ENSMUSG00000030417"/>
<dbReference type="eggNOG" id="KOG3431">
    <property type="taxonomic scope" value="Eukaryota"/>
</dbReference>
<dbReference type="GeneTree" id="ENSGT00390000011085"/>
<dbReference type="HOGENOM" id="CLU_122978_4_0_1"/>
<dbReference type="InParanoid" id="P56812"/>
<dbReference type="OMA" id="MQYEMQK"/>
<dbReference type="OrthoDB" id="10252486at2759"/>
<dbReference type="PhylomeDB" id="P56812"/>
<dbReference type="TreeFam" id="TF313112"/>
<dbReference type="BioGRID-ORCS" id="56330">
    <property type="hits" value="10 hits in 79 CRISPR screens"/>
</dbReference>
<dbReference type="ChiTaRS" id="Pdcd5">
    <property type="organism name" value="mouse"/>
</dbReference>
<dbReference type="PRO" id="PR:P56812"/>
<dbReference type="Proteomes" id="UP000000589">
    <property type="component" value="Chromosome 7"/>
</dbReference>
<dbReference type="RNAct" id="P56812">
    <property type="molecule type" value="protein"/>
</dbReference>
<dbReference type="Bgee" id="ENSMUSG00000030417">
    <property type="expression patterns" value="Expressed in myocardium of ventricle and 130 other cell types or tissues"/>
</dbReference>
<dbReference type="ExpressionAtlas" id="P56812">
    <property type="expression patterns" value="baseline and differential"/>
</dbReference>
<dbReference type="GO" id="GO:0005737">
    <property type="term" value="C:cytoplasm"/>
    <property type="evidence" value="ECO:0000266"/>
    <property type="project" value="MGI"/>
</dbReference>
<dbReference type="GO" id="GO:0005634">
    <property type="term" value="C:nucleus"/>
    <property type="evidence" value="ECO:0000266"/>
    <property type="project" value="MGI"/>
</dbReference>
<dbReference type="GO" id="GO:0003677">
    <property type="term" value="F:DNA binding"/>
    <property type="evidence" value="ECO:0007669"/>
    <property type="project" value="InterPro"/>
</dbReference>
<dbReference type="GO" id="GO:0006915">
    <property type="term" value="P:apoptotic process"/>
    <property type="evidence" value="ECO:0000266"/>
    <property type="project" value="MGI"/>
</dbReference>
<dbReference type="FunFam" id="1.10.8.140:FF:000001">
    <property type="entry name" value="Programmed cell death protein 5"/>
    <property type="match status" value="1"/>
</dbReference>
<dbReference type="Gene3D" id="1.10.8.140">
    <property type="entry name" value="PDCD5-like"/>
    <property type="match status" value="1"/>
</dbReference>
<dbReference type="InterPro" id="IPR002836">
    <property type="entry name" value="PDCD5-like"/>
</dbReference>
<dbReference type="InterPro" id="IPR036883">
    <property type="entry name" value="PDCD5-like_sf"/>
</dbReference>
<dbReference type="PANTHER" id="PTHR10840">
    <property type="entry name" value="PROGRAMMED CELL DEATH PROTEIN 5"/>
    <property type="match status" value="1"/>
</dbReference>
<dbReference type="PANTHER" id="PTHR10840:SF0">
    <property type="entry name" value="PROGRAMMED CELL DEATH PROTEIN 5"/>
    <property type="match status" value="1"/>
</dbReference>
<dbReference type="Pfam" id="PF01984">
    <property type="entry name" value="dsDNA_bind"/>
    <property type="match status" value="1"/>
</dbReference>
<dbReference type="PIRSF" id="PIRSF015730">
    <property type="entry name" value="TFAR19"/>
    <property type="match status" value="1"/>
</dbReference>
<dbReference type="SUPFAM" id="SSF46950">
    <property type="entry name" value="Double-stranded DNA-binding domain"/>
    <property type="match status" value="1"/>
</dbReference>
<sequence length="126" mass="14275">MADEELEALRKQRLAELQAKHGDPGDAAQQEAKQREAEMRNSILAQVLDQSARARLSNLALVKPEKTKAVENYLIQMARYGQLSGKVSEQGLIEILEKVSQQTEKKTTVKFNRRKVMDSDEDDADY</sequence>
<keyword id="KW-0007">Acetylation</keyword>
<keyword id="KW-0053">Apoptosis</keyword>
<keyword id="KW-0597">Phosphoprotein</keyword>
<keyword id="KW-1185">Reference proteome</keyword>
<name>PDCD5_MOUSE</name>